<keyword id="KW-0963">Cytoplasm</keyword>
<keyword id="KW-0489">Methyltransferase</keyword>
<keyword id="KW-0496">Mitochondrion</keyword>
<keyword id="KW-0539">Nucleus</keyword>
<keyword id="KW-1185">Reference proteome</keyword>
<keyword id="KW-0949">S-adenosyl-L-methionine</keyword>
<keyword id="KW-0808">Transferase</keyword>
<keyword id="KW-0819">tRNA processing</keyword>
<feature type="chain" id="PRO_0000414140" description="tRNA (guanine(37)-N(1))-methyltransferase 1">
    <location>
        <begin position="1"/>
        <end position="608"/>
    </location>
</feature>
<feature type="region of interest" description="Disordered" evidence="2">
    <location>
        <begin position="207"/>
        <end position="229"/>
    </location>
</feature>
<feature type="compositionally biased region" description="Basic and acidic residues" evidence="2">
    <location>
        <begin position="216"/>
        <end position="229"/>
    </location>
</feature>
<feature type="binding site" evidence="1">
    <location>
        <position position="425"/>
    </location>
    <ligand>
        <name>S-adenosyl-L-methionine</name>
        <dbReference type="ChEBI" id="CHEBI:59789"/>
    </ligand>
</feature>
<feature type="binding site" evidence="1">
    <location>
        <begin position="463"/>
        <end position="464"/>
    </location>
    <ligand>
        <name>S-adenosyl-L-methionine</name>
        <dbReference type="ChEBI" id="CHEBI:59789"/>
    </ligand>
</feature>
<feature type="binding site" evidence="1">
    <location>
        <begin position="491"/>
        <end position="492"/>
    </location>
    <ligand>
        <name>S-adenosyl-L-methionine</name>
        <dbReference type="ChEBI" id="CHEBI:59789"/>
    </ligand>
</feature>
<feature type="binding site" evidence="1">
    <location>
        <position position="514"/>
    </location>
    <ligand>
        <name>S-adenosyl-L-methionine</name>
        <dbReference type="ChEBI" id="CHEBI:59789"/>
    </ligand>
</feature>
<evidence type="ECO:0000255" key="1">
    <source>
        <dbReference type="HAMAP-Rule" id="MF_03152"/>
    </source>
</evidence>
<evidence type="ECO:0000256" key="2">
    <source>
        <dbReference type="SAM" id="MobiDB-lite"/>
    </source>
</evidence>
<evidence type="ECO:0000305" key="3"/>
<reference key="1">
    <citation type="journal article" date="2007" name="Nature">
        <title>The grapevine genome sequence suggests ancestral hexaploidization in major angiosperm phyla.</title>
        <authorList>
            <person name="Jaillon O."/>
            <person name="Aury J.-M."/>
            <person name="Noel B."/>
            <person name="Policriti A."/>
            <person name="Clepet C."/>
            <person name="Casagrande A."/>
            <person name="Choisne N."/>
            <person name="Aubourg S."/>
            <person name="Vitulo N."/>
            <person name="Jubin C."/>
            <person name="Vezzi A."/>
            <person name="Legeai F."/>
            <person name="Hugueney P."/>
            <person name="Dasilva C."/>
            <person name="Horner D."/>
            <person name="Mica E."/>
            <person name="Jublot D."/>
            <person name="Poulain J."/>
            <person name="Bruyere C."/>
            <person name="Billault A."/>
            <person name="Segurens B."/>
            <person name="Gouyvenoux M."/>
            <person name="Ugarte E."/>
            <person name="Cattonaro F."/>
            <person name="Anthouard V."/>
            <person name="Vico V."/>
            <person name="Del Fabbro C."/>
            <person name="Alaux M."/>
            <person name="Di Gaspero G."/>
            <person name="Dumas V."/>
            <person name="Felice N."/>
            <person name="Paillard S."/>
            <person name="Juman I."/>
            <person name="Moroldo M."/>
            <person name="Scalabrin S."/>
            <person name="Canaguier A."/>
            <person name="Le Clainche I."/>
            <person name="Malacrida G."/>
            <person name="Durand E."/>
            <person name="Pesole G."/>
            <person name="Laucou V."/>
            <person name="Chatelet P."/>
            <person name="Merdinoglu D."/>
            <person name="Delledonne M."/>
            <person name="Pezzotti M."/>
            <person name="Lecharny A."/>
            <person name="Scarpelli C."/>
            <person name="Artiguenave F."/>
            <person name="Pe M.E."/>
            <person name="Valle G."/>
            <person name="Morgante M."/>
            <person name="Caboche M."/>
            <person name="Adam-Blondon A.-F."/>
            <person name="Weissenbach J."/>
            <person name="Quetier F."/>
            <person name="Wincker P."/>
        </authorList>
    </citation>
    <scope>NUCLEOTIDE SEQUENCE [LARGE SCALE GENOMIC DNA]</scope>
    <source>
        <strain>cv. Pinot noir / PN40024</strain>
    </source>
</reference>
<gene>
    <name type="ordered locus">VIT_19s0014g03930</name>
</gene>
<accession>F6H2F8</accession>
<comment type="function">
    <text evidence="1">Specifically methylates the N1 position of guanosine-37 in various cytoplasmic and mitochondrial tRNAs. Methylation is not dependent on the nature of the nucleoside 5' of the target nucleoside. This is the first step in the biosynthesis of wybutosine (yW), a modified base adjacent to the anticodon of tRNAs and required for accurate decoding.</text>
</comment>
<comment type="catalytic activity">
    <reaction evidence="1">
        <text>guanosine(37) in tRNA + S-adenosyl-L-methionine = N(1)-methylguanosine(37) in tRNA + S-adenosyl-L-homocysteine + H(+)</text>
        <dbReference type="Rhea" id="RHEA:36899"/>
        <dbReference type="Rhea" id="RHEA-COMP:10145"/>
        <dbReference type="Rhea" id="RHEA-COMP:10147"/>
        <dbReference type="ChEBI" id="CHEBI:15378"/>
        <dbReference type="ChEBI" id="CHEBI:57856"/>
        <dbReference type="ChEBI" id="CHEBI:59789"/>
        <dbReference type="ChEBI" id="CHEBI:73542"/>
        <dbReference type="ChEBI" id="CHEBI:74269"/>
        <dbReference type="EC" id="2.1.1.228"/>
    </reaction>
</comment>
<comment type="subunit">
    <text evidence="1">Monomer.</text>
</comment>
<comment type="subcellular location">
    <subcellularLocation>
        <location evidence="1">Mitochondrion matrix</location>
    </subcellularLocation>
    <subcellularLocation>
        <location evidence="1">Nucleus</location>
    </subcellularLocation>
    <subcellularLocation>
        <location evidence="1">Cytoplasm</location>
    </subcellularLocation>
    <text evidence="1">Predominantly in the mitochondria and in the nucleus.</text>
</comment>
<comment type="similarity">
    <text evidence="3">Belongs to the class I-like SAM-binding methyltransferase superfamily. TRM5/TYW2 family.</text>
</comment>
<organism>
    <name type="scientific">Vitis vinifera</name>
    <name type="common">Grape</name>
    <dbReference type="NCBI Taxonomy" id="29760"/>
    <lineage>
        <taxon>Eukaryota</taxon>
        <taxon>Viridiplantae</taxon>
        <taxon>Streptophyta</taxon>
        <taxon>Embryophyta</taxon>
        <taxon>Tracheophyta</taxon>
        <taxon>Spermatophyta</taxon>
        <taxon>Magnoliopsida</taxon>
        <taxon>eudicotyledons</taxon>
        <taxon>Gunneridae</taxon>
        <taxon>Pentapetalae</taxon>
        <taxon>rosids</taxon>
        <taxon>Vitales</taxon>
        <taxon>Vitaceae</taxon>
        <taxon>Viteae</taxon>
        <taxon>Vitis</taxon>
    </lineage>
</organism>
<name>TRM51_VITVI</name>
<sequence>MVTKLFLRPHSLSFTLLSGIHLFPKTSLSKPITLCLLSTTATTPILTLTQTLDPNLSYGPSLHKGTKPLNHQNHQLIAATPGEEECVFDKEAFTRVFNLTAIRVPSKDCFALENRLRGHLLNWPRIRNVARVPGDEVEDGLVKLLGEKRNSSDGSESEGDFDSLNRRIYGKAEGDGEILSPVLYRDTLAKTFDSQGFANFRNLAKLSRPKKKKRRKEEERSEGKKRTGKNEFAMVEVVEDGEEGEDLRGLLGEEFKRKRWRGSTRLLLLDERYADKGVEELPEAIKAVLKEDTGQSMTSTFELVKCKLTLFYNYWQMNEILEALLPEGMIVPSAFEMVGHIAHLNLRDEHLPYKKLIAKVVLDKNKPKIQTVVNKTDAIHNDYRTMQLEVLAGNRSLVTTVIENGMRFQVDLATVYWNSRLATERQRLLNCFTRNDVVCDVFSGVGPIAISAAKKVKRVYANDLNPYAIEYLESNSVLNKLERKIKVFNMDGRRFINAMFTSDKAESITQVVMNLPNDAAEFLDAFRGIFRKKSRDKQLKLPMIHVYGFSKAQDPEFDFHQRIRIALSEVAVDVEMHRVRLVAPGKWMLRASFILPKSVVFAKAVLYM</sequence>
<dbReference type="EC" id="2.1.1.228" evidence="1"/>
<dbReference type="EMBL" id="FN595229">
    <property type="protein sequence ID" value="CCB46402.1"/>
    <property type="molecule type" value="Genomic_DNA"/>
</dbReference>
<dbReference type="EMBL" id="FN597046">
    <property type="status" value="NOT_ANNOTATED_CDS"/>
    <property type="molecule type" value="Genomic_DNA"/>
</dbReference>
<dbReference type="RefSeq" id="XP_002284299.1">
    <property type="nucleotide sequence ID" value="XM_002284263.3"/>
</dbReference>
<dbReference type="SMR" id="F6H2F8"/>
<dbReference type="FunCoup" id="F6H2F8">
    <property type="interactions" value="301"/>
</dbReference>
<dbReference type="STRING" id="29760.F6H2F8"/>
<dbReference type="PaxDb" id="29760-VIT_19s0014g03930.t01"/>
<dbReference type="EnsemblPlants" id="Vitvi19g00319_t001">
    <property type="protein sequence ID" value="Vitvi19g00319_P001"/>
    <property type="gene ID" value="Vitvi19g00319"/>
</dbReference>
<dbReference type="Gramene" id="Vitvi19g00319_t001">
    <property type="protein sequence ID" value="Vitvi19g00319_P001"/>
    <property type="gene ID" value="Vitvi19g00319"/>
</dbReference>
<dbReference type="eggNOG" id="KOG2078">
    <property type="taxonomic scope" value="Eukaryota"/>
</dbReference>
<dbReference type="HOGENOM" id="CLU_034422_1_0_1"/>
<dbReference type="InParanoid" id="F6H2F8"/>
<dbReference type="OrthoDB" id="408788at2759"/>
<dbReference type="Proteomes" id="UP000009183">
    <property type="component" value="Chromosome 19"/>
</dbReference>
<dbReference type="GO" id="GO:0005737">
    <property type="term" value="C:cytoplasm"/>
    <property type="evidence" value="ECO:0000318"/>
    <property type="project" value="GO_Central"/>
</dbReference>
<dbReference type="GO" id="GO:0005759">
    <property type="term" value="C:mitochondrial matrix"/>
    <property type="evidence" value="ECO:0007669"/>
    <property type="project" value="UniProtKB-SubCell"/>
</dbReference>
<dbReference type="GO" id="GO:0005634">
    <property type="term" value="C:nucleus"/>
    <property type="evidence" value="ECO:0007669"/>
    <property type="project" value="UniProtKB-SubCell"/>
</dbReference>
<dbReference type="GO" id="GO:0052906">
    <property type="term" value="F:tRNA (guanine(37)-N1)-methyltransferase activity"/>
    <property type="evidence" value="ECO:0007669"/>
    <property type="project" value="UniProtKB-UniRule"/>
</dbReference>
<dbReference type="GO" id="GO:0008175">
    <property type="term" value="F:tRNA methyltransferase activity"/>
    <property type="evidence" value="ECO:0000318"/>
    <property type="project" value="GO_Central"/>
</dbReference>
<dbReference type="GO" id="GO:0002939">
    <property type="term" value="P:tRNA N1-guanine methylation"/>
    <property type="evidence" value="ECO:0000318"/>
    <property type="project" value="GO_Central"/>
</dbReference>
<dbReference type="CDD" id="cd02440">
    <property type="entry name" value="AdoMet_MTases"/>
    <property type="match status" value="1"/>
</dbReference>
<dbReference type="FunFam" id="3.30.300.110:FF:000001">
    <property type="entry name" value="tRNA (guanine(37)-N1)-methyltransferase"/>
    <property type="match status" value="1"/>
</dbReference>
<dbReference type="FunFam" id="3.40.50.150:FF:000225">
    <property type="entry name" value="tRNA (guanine(37)-N1)-methyltransferase"/>
    <property type="match status" value="1"/>
</dbReference>
<dbReference type="Gene3D" id="3.30.300.110">
    <property type="entry name" value="Met-10+ protein-like domains"/>
    <property type="match status" value="1"/>
</dbReference>
<dbReference type="Gene3D" id="3.40.50.150">
    <property type="entry name" value="Vaccinia Virus protein VP39"/>
    <property type="match status" value="1"/>
</dbReference>
<dbReference type="HAMAP" id="MF_03152">
    <property type="entry name" value="TRM5"/>
    <property type="match status" value="1"/>
</dbReference>
<dbReference type="InterPro" id="IPR030382">
    <property type="entry name" value="MeTrfase_TRM5/TYW2"/>
</dbReference>
<dbReference type="InterPro" id="IPR029063">
    <property type="entry name" value="SAM-dependent_MTases_sf"/>
</dbReference>
<dbReference type="InterPro" id="IPR056743">
    <property type="entry name" value="TRM5-TYW2-like_MTfase"/>
</dbReference>
<dbReference type="InterPro" id="IPR056744">
    <property type="entry name" value="TRM5/TYW2-like_N"/>
</dbReference>
<dbReference type="InterPro" id="IPR025792">
    <property type="entry name" value="tRNA_Gua_MeTrfase_euk"/>
</dbReference>
<dbReference type="PANTHER" id="PTHR23245:SF43">
    <property type="entry name" value="TRNA (GUANINE(37)-N1)-METHYLTRANSFERASE 2"/>
    <property type="match status" value="1"/>
</dbReference>
<dbReference type="PANTHER" id="PTHR23245">
    <property type="entry name" value="TRNA METHYLTRANSFERASE"/>
    <property type="match status" value="1"/>
</dbReference>
<dbReference type="Pfam" id="PF02475">
    <property type="entry name" value="TRM5-TYW2_MTfase"/>
    <property type="match status" value="1"/>
</dbReference>
<dbReference type="Pfam" id="PF25133">
    <property type="entry name" value="TYW2_N_2"/>
    <property type="match status" value="1"/>
</dbReference>
<dbReference type="SUPFAM" id="SSF53335">
    <property type="entry name" value="S-adenosyl-L-methionine-dependent methyltransferases"/>
    <property type="match status" value="1"/>
</dbReference>
<dbReference type="PROSITE" id="PS51684">
    <property type="entry name" value="SAM_MT_TRM5_TYW2"/>
    <property type="match status" value="1"/>
</dbReference>
<proteinExistence type="inferred from homology"/>
<protein>
    <recommendedName>
        <fullName evidence="1">tRNA (guanine(37)-N(1))-methyltransferase 1</fullName>
        <ecNumber evidence="1">2.1.1.228</ecNumber>
    </recommendedName>
    <alternativeName>
        <fullName evidence="1">M1G-methyltransferase 1</fullName>
    </alternativeName>
    <alternativeName>
        <fullName evidence="1">tRNA [GM37] methyltransferase 1</fullName>
    </alternativeName>
    <alternativeName>
        <fullName evidence="1">tRNA methyltransferase 5 homolog 1</fullName>
    </alternativeName>
</protein>